<proteinExistence type="inferred from homology"/>
<organism>
    <name type="scientific">Oryza sativa subsp. indica</name>
    <name type="common">Rice</name>
    <dbReference type="NCBI Taxonomy" id="39946"/>
    <lineage>
        <taxon>Eukaryota</taxon>
        <taxon>Viridiplantae</taxon>
        <taxon>Streptophyta</taxon>
        <taxon>Embryophyta</taxon>
        <taxon>Tracheophyta</taxon>
        <taxon>Spermatophyta</taxon>
        <taxon>Magnoliopsida</taxon>
        <taxon>Liliopsida</taxon>
        <taxon>Poales</taxon>
        <taxon>Poaceae</taxon>
        <taxon>BOP clade</taxon>
        <taxon>Oryzoideae</taxon>
        <taxon>Oryzeae</taxon>
        <taxon>Oryzinae</taxon>
        <taxon>Oryza</taxon>
        <taxon>Oryza sativa</taxon>
    </lineage>
</organism>
<reference key="1">
    <citation type="journal article" date="2005" name="PLoS Biol.">
        <title>The genomes of Oryza sativa: a history of duplications.</title>
        <authorList>
            <person name="Yu J."/>
            <person name="Wang J."/>
            <person name="Lin W."/>
            <person name="Li S."/>
            <person name="Li H."/>
            <person name="Zhou J."/>
            <person name="Ni P."/>
            <person name="Dong W."/>
            <person name="Hu S."/>
            <person name="Zeng C."/>
            <person name="Zhang J."/>
            <person name="Zhang Y."/>
            <person name="Li R."/>
            <person name="Xu Z."/>
            <person name="Li S."/>
            <person name="Li X."/>
            <person name="Zheng H."/>
            <person name="Cong L."/>
            <person name="Lin L."/>
            <person name="Yin J."/>
            <person name="Geng J."/>
            <person name="Li G."/>
            <person name="Shi J."/>
            <person name="Liu J."/>
            <person name="Lv H."/>
            <person name="Li J."/>
            <person name="Wang J."/>
            <person name="Deng Y."/>
            <person name="Ran L."/>
            <person name="Shi X."/>
            <person name="Wang X."/>
            <person name="Wu Q."/>
            <person name="Li C."/>
            <person name="Ren X."/>
            <person name="Wang J."/>
            <person name="Wang X."/>
            <person name="Li D."/>
            <person name="Liu D."/>
            <person name="Zhang X."/>
            <person name="Ji Z."/>
            <person name="Zhao W."/>
            <person name="Sun Y."/>
            <person name="Zhang Z."/>
            <person name="Bao J."/>
            <person name="Han Y."/>
            <person name="Dong L."/>
            <person name="Ji J."/>
            <person name="Chen P."/>
            <person name="Wu S."/>
            <person name="Liu J."/>
            <person name="Xiao Y."/>
            <person name="Bu D."/>
            <person name="Tan J."/>
            <person name="Yang L."/>
            <person name="Ye C."/>
            <person name="Zhang J."/>
            <person name="Xu J."/>
            <person name="Zhou Y."/>
            <person name="Yu Y."/>
            <person name="Zhang B."/>
            <person name="Zhuang S."/>
            <person name="Wei H."/>
            <person name="Liu B."/>
            <person name="Lei M."/>
            <person name="Yu H."/>
            <person name="Li Y."/>
            <person name="Xu H."/>
            <person name="Wei S."/>
            <person name="He X."/>
            <person name="Fang L."/>
            <person name="Zhang Z."/>
            <person name="Zhang Y."/>
            <person name="Huang X."/>
            <person name="Su Z."/>
            <person name="Tong W."/>
            <person name="Li J."/>
            <person name="Tong Z."/>
            <person name="Li S."/>
            <person name="Ye J."/>
            <person name="Wang L."/>
            <person name="Fang L."/>
            <person name="Lei T."/>
            <person name="Chen C.-S."/>
            <person name="Chen H.-C."/>
            <person name="Xu Z."/>
            <person name="Li H."/>
            <person name="Huang H."/>
            <person name="Zhang F."/>
            <person name="Xu H."/>
            <person name="Li N."/>
            <person name="Zhao C."/>
            <person name="Li S."/>
            <person name="Dong L."/>
            <person name="Huang Y."/>
            <person name="Li L."/>
            <person name="Xi Y."/>
            <person name="Qi Q."/>
            <person name="Li W."/>
            <person name="Zhang B."/>
            <person name="Hu W."/>
            <person name="Zhang Y."/>
            <person name="Tian X."/>
            <person name="Jiao Y."/>
            <person name="Liang X."/>
            <person name="Jin J."/>
            <person name="Gao L."/>
            <person name="Zheng W."/>
            <person name="Hao B."/>
            <person name="Liu S.-M."/>
            <person name="Wang W."/>
            <person name="Yuan L."/>
            <person name="Cao M."/>
            <person name="McDermott J."/>
            <person name="Samudrala R."/>
            <person name="Wang J."/>
            <person name="Wong G.K.-S."/>
            <person name="Yang H."/>
        </authorList>
    </citation>
    <scope>NUCLEOTIDE SEQUENCE [LARGE SCALE GENOMIC DNA]</scope>
    <source>
        <strain>cv. 93-11</strain>
    </source>
</reference>
<keyword id="KW-0150">Chloroplast</keyword>
<keyword id="KW-0175">Coiled coil</keyword>
<keyword id="KW-0378">Hydrolase</keyword>
<keyword id="KW-0472">Membrane</keyword>
<keyword id="KW-0482">Metalloprotease</keyword>
<keyword id="KW-0934">Plastid</keyword>
<keyword id="KW-0645">Protease</keyword>
<keyword id="KW-1185">Reference proteome</keyword>
<keyword id="KW-0809">Transit peptide</keyword>
<keyword id="KW-0812">Transmembrane</keyword>
<keyword id="KW-1133">Transmembrane helix</keyword>
<name>EGY3_ORYSI</name>
<protein>
    <recommendedName>
        <fullName>Probable zinc metalloprotease EGY3, chloroplastic</fullName>
        <ecNumber>3.4.24.-</ecNumber>
    </recommendedName>
    <alternativeName>
        <fullName>Protein ETHYLENE-DEPENDENT GRAVITROPISM-DEFICIENT AND YELLOW-GREEN 3</fullName>
    </alternativeName>
</protein>
<dbReference type="EC" id="3.4.24.-"/>
<dbReference type="EMBL" id="CM000128">
    <property type="protein sequence ID" value="EAY91736.1"/>
    <property type="molecule type" value="Genomic_DNA"/>
</dbReference>
<dbReference type="STRING" id="39946.A2XLM6"/>
<dbReference type="EnsemblPlants" id="BGIOSGA009877-TA">
    <property type="protein sequence ID" value="BGIOSGA009877-PA"/>
    <property type="gene ID" value="BGIOSGA009877"/>
</dbReference>
<dbReference type="EnsemblPlants" id="OsPr106_03g0033050.01">
    <property type="protein sequence ID" value="OsPr106_03g0033050.01"/>
    <property type="gene ID" value="OsPr106_03g0033050"/>
</dbReference>
<dbReference type="Gramene" id="BGIOSGA009877-TA">
    <property type="protein sequence ID" value="BGIOSGA009877-PA"/>
    <property type="gene ID" value="BGIOSGA009877"/>
</dbReference>
<dbReference type="Gramene" id="OsPr106_03g0033050.01">
    <property type="protein sequence ID" value="OsPr106_03g0033050.01"/>
    <property type="gene ID" value="OsPr106_03g0033050"/>
</dbReference>
<dbReference type="HOGENOM" id="CLU_032693_0_0_1"/>
<dbReference type="OMA" id="MPRVIRI"/>
<dbReference type="Proteomes" id="UP000007015">
    <property type="component" value="Chromosome 3"/>
</dbReference>
<dbReference type="GO" id="GO:0031969">
    <property type="term" value="C:chloroplast membrane"/>
    <property type="evidence" value="ECO:0007669"/>
    <property type="project" value="UniProtKB-SubCell"/>
</dbReference>
<dbReference type="GO" id="GO:0008237">
    <property type="term" value="F:metallopeptidase activity"/>
    <property type="evidence" value="ECO:0007669"/>
    <property type="project" value="UniProtKB-KW"/>
</dbReference>
<dbReference type="GO" id="GO:0006508">
    <property type="term" value="P:proteolysis"/>
    <property type="evidence" value="ECO:0007669"/>
    <property type="project" value="UniProtKB-KW"/>
</dbReference>
<dbReference type="CDD" id="cd06160">
    <property type="entry name" value="S2P-M50_like_2"/>
    <property type="match status" value="1"/>
</dbReference>
<dbReference type="InterPro" id="IPR044838">
    <property type="entry name" value="EGY1-like"/>
</dbReference>
<dbReference type="PANTHER" id="PTHR31412:SF2">
    <property type="entry name" value="ZINC METALLOPEPTIDASE EGY3, CHLOROPLASTIC-RELATED"/>
    <property type="match status" value="1"/>
</dbReference>
<dbReference type="PANTHER" id="PTHR31412">
    <property type="entry name" value="ZINC METALLOPROTEASE EGY1"/>
    <property type="match status" value="1"/>
</dbReference>
<gene>
    <name type="primary">EGY3</name>
    <name type="ORF">OsI_13377</name>
</gene>
<feature type="transit peptide" description="Chloroplast" evidence="2">
    <location>
        <begin position="1"/>
        <end position="54"/>
    </location>
</feature>
<feature type="chain" id="PRO_0000428652" description="Probable zinc metalloprotease EGY3, chloroplastic">
    <location>
        <begin position="55"/>
        <end position="586"/>
    </location>
</feature>
<feature type="transmembrane region" description="Helical" evidence="2">
    <location>
        <begin position="287"/>
        <end position="307"/>
    </location>
</feature>
<feature type="transmembrane region" description="Helical" evidence="2">
    <location>
        <begin position="318"/>
        <end position="338"/>
    </location>
</feature>
<feature type="transmembrane region" description="Helical" evidence="2">
    <location>
        <begin position="389"/>
        <end position="409"/>
    </location>
</feature>
<feature type="transmembrane region" description="Helical" evidence="2">
    <location>
        <begin position="427"/>
        <end position="447"/>
    </location>
</feature>
<feature type="transmembrane region" description="Helical" evidence="2">
    <location>
        <begin position="454"/>
        <end position="474"/>
    </location>
</feature>
<feature type="transmembrane region" description="Helical" evidence="2">
    <location>
        <begin position="506"/>
        <end position="526"/>
    </location>
</feature>
<feature type="transmembrane region" description="Helical" evidence="2">
    <location>
        <begin position="550"/>
        <end position="570"/>
    </location>
</feature>
<feature type="region of interest" description="Disordered" evidence="3">
    <location>
        <begin position="62"/>
        <end position="118"/>
    </location>
</feature>
<feature type="coiled-coil region" evidence="2">
    <location>
        <begin position="103"/>
        <end position="195"/>
    </location>
</feature>
<feature type="compositionally biased region" description="Basic and acidic residues" evidence="3">
    <location>
        <begin position="62"/>
        <end position="73"/>
    </location>
</feature>
<sequence>MSSSSLVTSLLFSSSSSSNTATSTSSRRSFSLFSKNQYCKPSPLRRSSSLLLVRCSLQQQQEEKAAPAAESHHAGGGQDDAATASHHAVEGENGVADADGGGVKKSKEELEEEEQQEVDWRSDEEFKRFMGNPSIEGAIKLEKKRADRKLRELDREPDANPLAGLLRGLARGQLAREKERLELAENTFKALDLNKLKSCFGYDTFFAVDVRRFGDGGIFIGNLRKPVEEVRPKLEKKIAEAAGTDVTLWFMEEKNDDITKQVCMVQPKAEIDLQLEITKLSTPWGYLSAVALAVTTFGTIAIMSGFFLKPGATFDDYVSDVLPLFAGFLSILGVSEIATRLTAARYGVKLSPSFLVPSNWTGCLGVMNNYESLLPNKKALFDIPVARAASAYLTSVALAVSAFVSDGSLNGGKNALFVRPEFFYNNPLLSFVQAVIGPYADELGNVLPNAVEGVGVPVDPLAFAGLLGIVVTSLNLLPCGRLEGGRIAQALFGRGAAAVLSFATSVALGAGAIIGGSVLCLAWGLFATFVRGGEEIPAQDEITPLGSERYAWGLVLAVVCLLTLFPNGGGTYSSDFLGAPFFRGGI</sequence>
<evidence type="ECO:0000250" key="1"/>
<evidence type="ECO:0000255" key="2"/>
<evidence type="ECO:0000256" key="3">
    <source>
        <dbReference type="SAM" id="MobiDB-lite"/>
    </source>
</evidence>
<evidence type="ECO:0000305" key="4"/>
<comment type="function">
    <text evidence="1">Probable membrane-associated metalloprotease that may be involved in chloroplast development.</text>
</comment>
<comment type="subcellular location">
    <subcellularLocation>
        <location evidence="4">Plastid</location>
        <location evidence="4">Chloroplast membrane</location>
        <topology evidence="4">Multi-pass membrane protein</topology>
    </subcellularLocation>
</comment>
<comment type="similarity">
    <text evidence="4">Belongs to the peptidase M50B family.</text>
</comment>
<accession>A2XLM6</accession>